<sequence>MAGHSKWANIQHRKGRQDEKRGKIWTRIIREITVAARAGGGDVSANPRLRLAIDKAKAANMPADRIKYNIDKATGNAEGLTYEEIRYEGYGIGGAAIIVDTMTDNRVRTVAEVRHAFSKYGGNMGTEGSVAFQFKHVGQLIFAPGTSEDKVMEVALEAGAEDVVTDEDGAIEVLTAPGDFEAVKNALEAAGLTPDAADVTMRPDVTIDLAGEDAERMQKLLDVIEDLDDVQEVYHNAAL</sequence>
<reference key="1">
    <citation type="submission" date="2006-12" db="EMBL/GenBank/DDBJ databases">
        <title>Complete sequence of Acidovorax avenae subsp. citrulli AAC00-1.</title>
        <authorList>
            <person name="Copeland A."/>
            <person name="Lucas S."/>
            <person name="Lapidus A."/>
            <person name="Barry K."/>
            <person name="Detter J.C."/>
            <person name="Glavina del Rio T."/>
            <person name="Dalin E."/>
            <person name="Tice H."/>
            <person name="Pitluck S."/>
            <person name="Kiss H."/>
            <person name="Brettin T."/>
            <person name="Bruce D."/>
            <person name="Han C."/>
            <person name="Tapia R."/>
            <person name="Gilna P."/>
            <person name="Schmutz J."/>
            <person name="Larimer F."/>
            <person name="Land M."/>
            <person name="Hauser L."/>
            <person name="Kyrpides N."/>
            <person name="Kim E."/>
            <person name="Stahl D."/>
            <person name="Richardson P."/>
        </authorList>
    </citation>
    <scope>NUCLEOTIDE SEQUENCE [LARGE SCALE GENOMIC DNA]</scope>
    <source>
        <strain>AAC00-1</strain>
    </source>
</reference>
<keyword id="KW-0963">Cytoplasm</keyword>
<keyword id="KW-0238">DNA-binding</keyword>
<keyword id="KW-0804">Transcription</keyword>
<keyword id="KW-0805">Transcription regulation</keyword>
<feature type="chain" id="PRO_1000045264" description="Probable transcriptional regulatory protein Aave_3203">
    <location>
        <begin position="1"/>
        <end position="239"/>
    </location>
</feature>
<feature type="region of interest" description="Disordered" evidence="2">
    <location>
        <begin position="1"/>
        <end position="20"/>
    </location>
</feature>
<accession>A1TS27</accession>
<comment type="subcellular location">
    <subcellularLocation>
        <location evidence="1">Cytoplasm</location>
    </subcellularLocation>
</comment>
<comment type="similarity">
    <text evidence="1">Belongs to the TACO1 family.</text>
</comment>
<name>Y3203_PARC0</name>
<dbReference type="EMBL" id="CP000512">
    <property type="protein sequence ID" value="ABM33765.1"/>
    <property type="molecule type" value="Genomic_DNA"/>
</dbReference>
<dbReference type="RefSeq" id="WP_011796273.1">
    <property type="nucleotide sequence ID" value="NC_008752.1"/>
</dbReference>
<dbReference type="SMR" id="A1TS27"/>
<dbReference type="STRING" id="397945.Aave_3203"/>
<dbReference type="KEGG" id="aav:Aave_3203"/>
<dbReference type="eggNOG" id="COG0217">
    <property type="taxonomic scope" value="Bacteria"/>
</dbReference>
<dbReference type="HOGENOM" id="CLU_062974_2_2_4"/>
<dbReference type="OrthoDB" id="9781053at2"/>
<dbReference type="Proteomes" id="UP000002596">
    <property type="component" value="Chromosome"/>
</dbReference>
<dbReference type="GO" id="GO:0005829">
    <property type="term" value="C:cytosol"/>
    <property type="evidence" value="ECO:0007669"/>
    <property type="project" value="TreeGrafter"/>
</dbReference>
<dbReference type="GO" id="GO:0003677">
    <property type="term" value="F:DNA binding"/>
    <property type="evidence" value="ECO:0007669"/>
    <property type="project" value="UniProtKB-UniRule"/>
</dbReference>
<dbReference type="GO" id="GO:0006355">
    <property type="term" value="P:regulation of DNA-templated transcription"/>
    <property type="evidence" value="ECO:0007669"/>
    <property type="project" value="UniProtKB-UniRule"/>
</dbReference>
<dbReference type="FunFam" id="1.10.10.200:FF:000002">
    <property type="entry name" value="Probable transcriptional regulatory protein CLM62_37755"/>
    <property type="match status" value="1"/>
</dbReference>
<dbReference type="FunFam" id="3.30.70.980:FF:000002">
    <property type="entry name" value="Probable transcriptional regulatory protein YebC"/>
    <property type="match status" value="1"/>
</dbReference>
<dbReference type="Gene3D" id="1.10.10.200">
    <property type="match status" value="1"/>
</dbReference>
<dbReference type="Gene3D" id="3.30.70.980">
    <property type="match status" value="2"/>
</dbReference>
<dbReference type="HAMAP" id="MF_00693">
    <property type="entry name" value="Transcrip_reg_TACO1"/>
    <property type="match status" value="1"/>
</dbReference>
<dbReference type="InterPro" id="IPR017856">
    <property type="entry name" value="Integrase-like_N"/>
</dbReference>
<dbReference type="InterPro" id="IPR048300">
    <property type="entry name" value="TACO1_YebC-like_2nd/3rd_dom"/>
</dbReference>
<dbReference type="InterPro" id="IPR049083">
    <property type="entry name" value="TACO1_YebC_N"/>
</dbReference>
<dbReference type="InterPro" id="IPR002876">
    <property type="entry name" value="Transcrip_reg_TACO1-like"/>
</dbReference>
<dbReference type="InterPro" id="IPR026564">
    <property type="entry name" value="Transcrip_reg_TACO1-like_dom3"/>
</dbReference>
<dbReference type="InterPro" id="IPR029072">
    <property type="entry name" value="YebC-like"/>
</dbReference>
<dbReference type="NCBIfam" id="NF001030">
    <property type="entry name" value="PRK00110.1"/>
    <property type="match status" value="1"/>
</dbReference>
<dbReference type="NCBIfam" id="NF009044">
    <property type="entry name" value="PRK12378.1"/>
    <property type="match status" value="1"/>
</dbReference>
<dbReference type="NCBIfam" id="TIGR01033">
    <property type="entry name" value="YebC/PmpR family DNA-binding transcriptional regulator"/>
    <property type="match status" value="1"/>
</dbReference>
<dbReference type="PANTHER" id="PTHR12532:SF6">
    <property type="entry name" value="TRANSCRIPTIONAL REGULATORY PROTEIN YEBC-RELATED"/>
    <property type="match status" value="1"/>
</dbReference>
<dbReference type="PANTHER" id="PTHR12532">
    <property type="entry name" value="TRANSLATIONAL ACTIVATOR OF CYTOCHROME C OXIDASE 1"/>
    <property type="match status" value="1"/>
</dbReference>
<dbReference type="Pfam" id="PF20772">
    <property type="entry name" value="TACO1_YebC_N"/>
    <property type="match status" value="1"/>
</dbReference>
<dbReference type="Pfam" id="PF01709">
    <property type="entry name" value="Transcrip_reg"/>
    <property type="match status" value="1"/>
</dbReference>
<dbReference type="SUPFAM" id="SSF75625">
    <property type="entry name" value="YebC-like"/>
    <property type="match status" value="1"/>
</dbReference>
<organism>
    <name type="scientific">Paracidovorax citrulli (strain AAC00-1)</name>
    <name type="common">Acidovorax citrulli</name>
    <dbReference type="NCBI Taxonomy" id="397945"/>
    <lineage>
        <taxon>Bacteria</taxon>
        <taxon>Pseudomonadati</taxon>
        <taxon>Pseudomonadota</taxon>
        <taxon>Betaproteobacteria</taxon>
        <taxon>Burkholderiales</taxon>
        <taxon>Comamonadaceae</taxon>
        <taxon>Paracidovorax</taxon>
    </lineage>
</organism>
<gene>
    <name type="ordered locus">Aave_3203</name>
</gene>
<evidence type="ECO:0000255" key="1">
    <source>
        <dbReference type="HAMAP-Rule" id="MF_00693"/>
    </source>
</evidence>
<evidence type="ECO:0000256" key="2">
    <source>
        <dbReference type="SAM" id="MobiDB-lite"/>
    </source>
</evidence>
<proteinExistence type="inferred from homology"/>
<protein>
    <recommendedName>
        <fullName evidence="1">Probable transcriptional regulatory protein Aave_3203</fullName>
    </recommendedName>
</protein>